<gene>
    <name type="primary">ygcQ</name>
    <name type="ordered locus">b2769</name>
    <name type="ordered locus">JW5440</name>
</gene>
<reference key="1">
    <citation type="journal article" date="1997" name="Science">
        <title>The complete genome sequence of Escherichia coli K-12.</title>
        <authorList>
            <person name="Blattner F.R."/>
            <person name="Plunkett G. III"/>
            <person name="Bloch C.A."/>
            <person name="Perna N.T."/>
            <person name="Burland V."/>
            <person name="Riley M."/>
            <person name="Collado-Vides J."/>
            <person name="Glasner J.D."/>
            <person name="Rode C.K."/>
            <person name="Mayhew G.F."/>
            <person name="Gregor J."/>
            <person name="Davis N.W."/>
            <person name="Kirkpatrick H.A."/>
            <person name="Goeden M.A."/>
            <person name="Rose D.J."/>
            <person name="Mau B."/>
            <person name="Shao Y."/>
        </authorList>
    </citation>
    <scope>NUCLEOTIDE SEQUENCE [LARGE SCALE GENOMIC DNA]</scope>
    <source>
        <strain>K12 / MG1655 / ATCC 47076</strain>
    </source>
</reference>
<reference key="2">
    <citation type="journal article" date="2006" name="Mol. Syst. Biol.">
        <title>Highly accurate genome sequences of Escherichia coli K-12 strains MG1655 and W3110.</title>
        <authorList>
            <person name="Hayashi K."/>
            <person name="Morooka N."/>
            <person name="Yamamoto Y."/>
            <person name="Fujita K."/>
            <person name="Isono K."/>
            <person name="Choi S."/>
            <person name="Ohtsubo E."/>
            <person name="Baba T."/>
            <person name="Wanner B.L."/>
            <person name="Mori H."/>
            <person name="Horiuchi T."/>
        </authorList>
    </citation>
    <scope>NUCLEOTIDE SEQUENCE [LARGE SCALE GENOMIC DNA]</scope>
    <source>
        <strain>K12 / W3110 / ATCC 27325 / DSM 5911</strain>
    </source>
</reference>
<accession>Q46907</accession>
<accession>Q2MA60</accession>
<keyword id="KW-0249">Electron transport</keyword>
<keyword id="KW-0274">FAD</keyword>
<keyword id="KW-0285">Flavoprotein</keyword>
<keyword id="KW-1185">Reference proteome</keyword>
<keyword id="KW-0813">Transport</keyword>
<evidence type="ECO:0000255" key="1"/>
<evidence type="ECO:0000305" key="2"/>
<comment type="function">
    <text>May play a role in a redox process.</text>
</comment>
<comment type="subunit">
    <text evidence="2">YgcQ and YgcR form a heterodimer.</text>
</comment>
<comment type="similarity">
    <text evidence="2">Belongs to the ETF alpha-subunit/FixB family.</text>
</comment>
<comment type="sequence caution" evidence="2">
    <conflict type="erroneous initiation">
        <sequence resource="EMBL-CDS" id="AAA69279"/>
    </conflict>
    <text>Extended N-terminus.</text>
</comment>
<protein>
    <recommendedName>
        <fullName>Putative electron transfer flavoprotein subunit YgcQ</fullName>
    </recommendedName>
</protein>
<name>YGCQ_ECOLI</name>
<feature type="chain" id="PRO_0000167868" description="Putative electron transfer flavoprotein subunit YgcQ">
    <location>
        <begin position="1"/>
        <end position="286"/>
    </location>
</feature>
<feature type="binding site" evidence="1">
    <location>
        <begin position="225"/>
        <end position="253"/>
    </location>
    <ligand>
        <name>FAD</name>
        <dbReference type="ChEBI" id="CHEBI:57692"/>
    </ligand>
</feature>
<dbReference type="EMBL" id="U29579">
    <property type="protein sequence ID" value="AAA69279.1"/>
    <property type="status" value="ALT_INIT"/>
    <property type="molecule type" value="Genomic_DNA"/>
</dbReference>
<dbReference type="EMBL" id="U00096">
    <property type="protein sequence ID" value="AAC75811.2"/>
    <property type="molecule type" value="Genomic_DNA"/>
</dbReference>
<dbReference type="EMBL" id="AP009048">
    <property type="protein sequence ID" value="BAE76846.1"/>
    <property type="molecule type" value="Genomic_DNA"/>
</dbReference>
<dbReference type="PIR" id="E65058">
    <property type="entry name" value="E65058"/>
</dbReference>
<dbReference type="RefSeq" id="NP_417249.4">
    <property type="nucleotide sequence ID" value="NC_000913.3"/>
</dbReference>
<dbReference type="RefSeq" id="WP_001299097.1">
    <property type="nucleotide sequence ID" value="NZ_LN832404.1"/>
</dbReference>
<dbReference type="SMR" id="Q46907"/>
<dbReference type="BioGRID" id="4262292">
    <property type="interactions" value="7"/>
</dbReference>
<dbReference type="BioGRID" id="850770">
    <property type="interactions" value="2"/>
</dbReference>
<dbReference type="FunCoup" id="Q46907">
    <property type="interactions" value="23"/>
</dbReference>
<dbReference type="IntAct" id="Q46907">
    <property type="interactions" value="2"/>
</dbReference>
<dbReference type="STRING" id="511145.b2769"/>
<dbReference type="PaxDb" id="511145-b2769"/>
<dbReference type="EnsemblBacteria" id="AAC75811">
    <property type="protein sequence ID" value="AAC75811"/>
    <property type="gene ID" value="b2769"/>
</dbReference>
<dbReference type="GeneID" id="946413"/>
<dbReference type="KEGG" id="ecj:JW5440"/>
<dbReference type="KEGG" id="eco:b2769"/>
<dbReference type="KEGG" id="ecoc:C3026_15215"/>
<dbReference type="PATRIC" id="fig|1411691.4.peg.3968"/>
<dbReference type="EchoBASE" id="EB2925"/>
<dbReference type="eggNOG" id="COG2025">
    <property type="taxonomic scope" value="Bacteria"/>
</dbReference>
<dbReference type="HOGENOM" id="CLU_034178_0_1_6"/>
<dbReference type="InParanoid" id="Q46907"/>
<dbReference type="OMA" id="DWLVSIE"/>
<dbReference type="OrthoDB" id="1912581at2"/>
<dbReference type="PhylomeDB" id="Q46907"/>
<dbReference type="BioCyc" id="EcoCyc:G7435-MONOMER"/>
<dbReference type="PRO" id="PR:Q46907"/>
<dbReference type="Proteomes" id="UP000000625">
    <property type="component" value="Chromosome"/>
</dbReference>
<dbReference type="GO" id="GO:0009055">
    <property type="term" value="F:electron transfer activity"/>
    <property type="evidence" value="ECO:0000318"/>
    <property type="project" value="GO_Central"/>
</dbReference>
<dbReference type="GO" id="GO:0050660">
    <property type="term" value="F:flavin adenine dinucleotide binding"/>
    <property type="evidence" value="ECO:0000318"/>
    <property type="project" value="GO_Central"/>
</dbReference>
<dbReference type="GO" id="GO:0033539">
    <property type="term" value="P:fatty acid beta-oxidation using acyl-CoA dehydrogenase"/>
    <property type="evidence" value="ECO:0000318"/>
    <property type="project" value="GO_Central"/>
</dbReference>
<dbReference type="Gene3D" id="3.40.50.620">
    <property type="entry name" value="HUPs"/>
    <property type="match status" value="1"/>
</dbReference>
<dbReference type="Gene3D" id="3.40.50.1220">
    <property type="entry name" value="TPP-binding domain"/>
    <property type="match status" value="1"/>
</dbReference>
<dbReference type="InterPro" id="IPR029035">
    <property type="entry name" value="DHS-like_NAD/FAD-binding_dom"/>
</dbReference>
<dbReference type="InterPro" id="IPR014730">
    <property type="entry name" value="ETF_a/b_N"/>
</dbReference>
<dbReference type="InterPro" id="IPR001308">
    <property type="entry name" value="ETF_a/FixB"/>
</dbReference>
<dbReference type="InterPro" id="IPR014731">
    <property type="entry name" value="ETF_asu_C"/>
</dbReference>
<dbReference type="InterPro" id="IPR014729">
    <property type="entry name" value="Rossmann-like_a/b/a_fold"/>
</dbReference>
<dbReference type="PANTHER" id="PTHR43153">
    <property type="entry name" value="ELECTRON TRANSFER FLAVOPROTEIN ALPHA"/>
    <property type="match status" value="1"/>
</dbReference>
<dbReference type="PANTHER" id="PTHR43153:SF5">
    <property type="entry name" value="PROTEIN FIXB-RELATED"/>
    <property type="match status" value="1"/>
</dbReference>
<dbReference type="Pfam" id="PF01012">
    <property type="entry name" value="ETF"/>
    <property type="match status" value="1"/>
</dbReference>
<dbReference type="Pfam" id="PF00766">
    <property type="entry name" value="ETF_alpha"/>
    <property type="match status" value="1"/>
</dbReference>
<dbReference type="PIRSF" id="PIRSF000089">
    <property type="entry name" value="Electra_flavoP_a"/>
    <property type="match status" value="1"/>
</dbReference>
<dbReference type="SUPFAM" id="SSF52402">
    <property type="entry name" value="Adenine nucleotide alpha hydrolases-like"/>
    <property type="match status" value="1"/>
</dbReference>
<dbReference type="SUPFAM" id="SSF52467">
    <property type="entry name" value="DHS-like NAD/FAD-binding domain"/>
    <property type="match status" value="1"/>
</dbReference>
<organism>
    <name type="scientific">Escherichia coli (strain K12)</name>
    <dbReference type="NCBI Taxonomy" id="83333"/>
    <lineage>
        <taxon>Bacteria</taxon>
        <taxon>Pseudomonadati</taxon>
        <taxon>Pseudomonadota</taxon>
        <taxon>Gammaproteobacteria</taxon>
        <taxon>Enterobacterales</taxon>
        <taxon>Enterobacteriaceae</taxon>
        <taxon>Escherichia</taxon>
    </lineage>
</organism>
<proteinExistence type="inferred from homology"/>
<sequence>MNIAIVTINQENAAIASWLAAQDFSGCTLAHWQIEPQPVVAEQVLDALVEQWQRTPADVVLFPPGTFGDELSTRLAWRLHGASICQVTSLDIPTVSVRKSHWGNALTATLQTEKRPLCLSLARQAGAAKNATLPSGMQQLNIVPGALPDWLVSTEDLKNVTRDPLAEARRVLVVGQGGEADNQEIAMLAEKLGAEVGYSRARVMNGGVDAEKVIGISGHLLAPEVCIVVGASGAAALMAGVRNSKFVVAINHDASAAVFSQADVGVVDDWKVVLEALVTNIHADCQ</sequence>